<sequence length="207" mass="23616">MLVFKGKLKEHPRWEVENELYRFRNRVFSDRLGWDVESHRGLEQDSFDTPDTHWVLIEDEEGLCGCIRLLSCAQDYMLPSIFPTALAGEAPPRSSDVWELTRLAIDANRAPRMGNGVSELTCVIFREVYAFARAKGIRELVAVVSLPVERIFRRLGLPIERLGHRQAVDLGAVRGVGIRFHLDERFARAVGHPMQGEYADARELVTE</sequence>
<reference key="1">
    <citation type="journal article" date="1997" name="J. Bacteriol.">
        <title>Quorum sensing in Aeromonas hydrophila and Aeromonas salmonicida: identification of the LuxRI homologs AhyRI and AsaRI and their cognate N-acylhomoserine lactone signal molecules.</title>
        <authorList>
            <person name="Swift S."/>
            <person name="Karlyshev A.V."/>
            <person name="Fish L."/>
            <person name="Durant E.L."/>
            <person name="Winson M.K."/>
            <person name="Chhabra S.R."/>
            <person name="Williams P."/>
            <person name="Macintyre S."/>
            <person name="Stewart G.S.A.B."/>
        </authorList>
    </citation>
    <scope>NUCLEOTIDE SEQUENCE [GENOMIC DNA]</scope>
    <source>
        <strain>ATCC 33658 / DSM 19634 / JCM 7874 / NCIMB 1102 / NCTC 12959</strain>
    </source>
</reference>
<feature type="chain" id="PRO_0000210880" description="Acyl-homoserine-lactone synthase">
    <location>
        <begin position="1"/>
        <end position="207"/>
    </location>
</feature>
<evidence type="ECO:0000255" key="1">
    <source>
        <dbReference type="PROSITE-ProRule" id="PRU00533"/>
    </source>
</evidence>
<comment type="function">
    <text>Required for the synthesis of N-butanoyl-L-homoserine lactone (BHL), an autoinducer molecule which binds to AsaR.</text>
</comment>
<comment type="catalytic activity">
    <reaction>
        <text>a fatty acyl-[ACP] + S-adenosyl-L-methionine = an N-acyl-L-homoserine lactone + S-methyl-5'-thioadenosine + holo-[ACP] + H(+)</text>
        <dbReference type="Rhea" id="RHEA:10096"/>
        <dbReference type="Rhea" id="RHEA-COMP:9685"/>
        <dbReference type="Rhea" id="RHEA-COMP:14125"/>
        <dbReference type="ChEBI" id="CHEBI:15378"/>
        <dbReference type="ChEBI" id="CHEBI:17509"/>
        <dbReference type="ChEBI" id="CHEBI:55474"/>
        <dbReference type="ChEBI" id="CHEBI:59789"/>
        <dbReference type="ChEBI" id="CHEBI:64479"/>
        <dbReference type="ChEBI" id="CHEBI:138651"/>
        <dbReference type="EC" id="2.3.1.184"/>
    </reaction>
</comment>
<comment type="similarity">
    <text evidence="1">Belongs to the autoinducer synthase family.</text>
</comment>
<organism>
    <name type="scientific">Aeromonas salmonicida</name>
    <dbReference type="NCBI Taxonomy" id="645"/>
    <lineage>
        <taxon>Bacteria</taxon>
        <taxon>Pseudomonadati</taxon>
        <taxon>Pseudomonadota</taxon>
        <taxon>Gammaproteobacteria</taxon>
        <taxon>Aeromonadales</taxon>
        <taxon>Aeromonadaceae</taxon>
        <taxon>Aeromonas</taxon>
    </lineage>
</organism>
<name>ASAI_AERSA</name>
<gene>
    <name type="primary">asaI</name>
</gene>
<proteinExistence type="inferred from homology"/>
<dbReference type="EC" id="2.3.1.184"/>
<dbReference type="EMBL" id="U65741">
    <property type="protein sequence ID" value="AAB70017.1"/>
    <property type="molecule type" value="Genomic_DNA"/>
</dbReference>
<dbReference type="RefSeq" id="WP_005315937.1">
    <property type="nucleotide sequence ID" value="NZ_UFSF01000001.1"/>
</dbReference>
<dbReference type="SMR" id="P70774"/>
<dbReference type="STRING" id="1233098.GCA_000315855_00759"/>
<dbReference type="OMA" id="LNILWHA"/>
<dbReference type="GO" id="GO:0061579">
    <property type="term" value="F:N-acyl homoserine lactone synthase activity"/>
    <property type="evidence" value="ECO:0007669"/>
    <property type="project" value="UniProtKB-EC"/>
</dbReference>
<dbReference type="GO" id="GO:0009372">
    <property type="term" value="P:quorum sensing"/>
    <property type="evidence" value="ECO:0007669"/>
    <property type="project" value="UniProtKB-KW"/>
</dbReference>
<dbReference type="GO" id="GO:0007165">
    <property type="term" value="P:signal transduction"/>
    <property type="evidence" value="ECO:0007669"/>
    <property type="project" value="TreeGrafter"/>
</dbReference>
<dbReference type="Gene3D" id="3.40.630.30">
    <property type="match status" value="1"/>
</dbReference>
<dbReference type="InterPro" id="IPR016181">
    <property type="entry name" value="Acyl_CoA_acyltransferase"/>
</dbReference>
<dbReference type="InterPro" id="IPR018311">
    <property type="entry name" value="Autoind_synth_CS"/>
</dbReference>
<dbReference type="InterPro" id="IPR001690">
    <property type="entry name" value="Autoind_synthase"/>
</dbReference>
<dbReference type="PANTHER" id="PTHR39322">
    <property type="entry name" value="ACYL-HOMOSERINE-LACTONE SYNTHASE"/>
    <property type="match status" value="1"/>
</dbReference>
<dbReference type="PANTHER" id="PTHR39322:SF1">
    <property type="entry name" value="ISOVALERYL-HOMOSERINE LACTONE SYNTHASE"/>
    <property type="match status" value="1"/>
</dbReference>
<dbReference type="Pfam" id="PF00765">
    <property type="entry name" value="Autoind_synth"/>
    <property type="match status" value="1"/>
</dbReference>
<dbReference type="PRINTS" id="PR01549">
    <property type="entry name" value="AUTOINDCRSYN"/>
</dbReference>
<dbReference type="SUPFAM" id="SSF55729">
    <property type="entry name" value="Acyl-CoA N-acyltransferases (Nat)"/>
    <property type="match status" value="1"/>
</dbReference>
<dbReference type="PROSITE" id="PS00949">
    <property type="entry name" value="AUTOINDUCER_SYNTH_1"/>
    <property type="match status" value="1"/>
</dbReference>
<dbReference type="PROSITE" id="PS51187">
    <property type="entry name" value="AUTOINDUCER_SYNTH_2"/>
    <property type="match status" value="1"/>
</dbReference>
<keyword id="KW-0071">Autoinducer synthesis</keyword>
<keyword id="KW-0673">Quorum sensing</keyword>
<keyword id="KW-0949">S-adenosyl-L-methionine</keyword>
<keyword id="KW-0808">Transferase</keyword>
<protein>
    <recommendedName>
        <fullName>Acyl-homoserine-lactone synthase</fullName>
        <ecNumber>2.3.1.184</ecNumber>
    </recommendedName>
    <alternativeName>
        <fullName>Autoinducer synthesis protein AsaI</fullName>
    </alternativeName>
</protein>
<accession>P70774</accession>